<keyword id="KW-0067">ATP-binding</keyword>
<keyword id="KW-0963">Cytoplasm</keyword>
<keyword id="KW-0315">Glutamine amidotransferase</keyword>
<keyword id="KW-0436">Ligase</keyword>
<keyword id="KW-0460">Magnesium</keyword>
<keyword id="KW-0479">Metal-binding</keyword>
<keyword id="KW-0547">Nucleotide-binding</keyword>
<keyword id="KW-0658">Purine biosynthesis</keyword>
<keyword id="KW-1185">Reference proteome</keyword>
<gene>
    <name evidence="1" type="primary">purL</name>
    <name type="synonym">purL1</name>
    <name type="ordered locus">Mfla_0887</name>
</gene>
<gene>
    <name evidence="1" type="primary">purL2</name>
    <name type="ordered locus">Mfla_1031</name>
</gene>
<protein>
    <recommendedName>
        <fullName evidence="1">Phosphoribosylformylglycinamidine synthase</fullName>
        <shortName evidence="1">FGAM synthase</shortName>
        <shortName evidence="1">FGAMS</shortName>
        <ecNumber evidence="1">6.3.5.3</ecNumber>
    </recommendedName>
    <alternativeName>
        <fullName evidence="1">Formylglycinamide ribonucleotide amidotransferase</fullName>
        <shortName evidence="1">FGAR amidotransferase</shortName>
        <shortName evidence="1">FGAR-AT</shortName>
    </alternativeName>
</protein>
<feature type="chain" id="PRO_0000264580" description="Phosphoribosylformylglycinamidine synthase">
    <location>
        <begin position="1"/>
        <end position="1293"/>
    </location>
</feature>
<feature type="domain" description="Glutamine amidotransferase type-1" evidence="1">
    <location>
        <begin position="1040"/>
        <end position="1293"/>
    </location>
</feature>
<feature type="active site" description="Nucleophile" evidence="1">
    <location>
        <position position="1133"/>
    </location>
</feature>
<feature type="active site" evidence="1">
    <location>
        <position position="1258"/>
    </location>
</feature>
<feature type="active site" evidence="1">
    <location>
        <position position="1260"/>
    </location>
</feature>
<feature type="binding site" evidence="1">
    <location>
        <begin position="308"/>
        <end position="319"/>
    </location>
    <ligand>
        <name>ATP</name>
        <dbReference type="ChEBI" id="CHEBI:30616"/>
    </ligand>
</feature>
<feature type="binding site" evidence="1">
    <location>
        <position position="675"/>
    </location>
    <ligand>
        <name>ATP</name>
        <dbReference type="ChEBI" id="CHEBI:30616"/>
    </ligand>
</feature>
<feature type="binding site" evidence="1">
    <location>
        <position position="676"/>
    </location>
    <ligand>
        <name>Mg(2+)</name>
        <dbReference type="ChEBI" id="CHEBI:18420"/>
    </ligand>
</feature>
<feature type="binding site" evidence="1">
    <location>
        <position position="715"/>
    </location>
    <ligand>
        <name>Mg(2+)</name>
        <dbReference type="ChEBI" id="CHEBI:18420"/>
    </ligand>
</feature>
<feature type="binding site" evidence="1">
    <location>
        <position position="719"/>
    </location>
    <ligand>
        <name>Mg(2+)</name>
        <dbReference type="ChEBI" id="CHEBI:18420"/>
    </ligand>
</feature>
<feature type="binding site" evidence="1">
    <location>
        <position position="883"/>
    </location>
    <ligand>
        <name>Mg(2+)</name>
        <dbReference type="ChEBI" id="CHEBI:18420"/>
    </ligand>
</feature>
<feature type="binding site" evidence="1">
    <location>
        <position position="885"/>
    </location>
    <ligand>
        <name>ATP</name>
        <dbReference type="ChEBI" id="CHEBI:30616"/>
    </ligand>
</feature>
<evidence type="ECO:0000255" key="1">
    <source>
        <dbReference type="HAMAP-Rule" id="MF_00419"/>
    </source>
</evidence>
<evidence type="ECO:0000305" key="2"/>
<proteinExistence type="inferred from homology"/>
<reference key="1">
    <citation type="submission" date="2006-03" db="EMBL/GenBank/DDBJ databases">
        <title>Complete sequence of Methylobacillus flagellatus KT.</title>
        <authorList>
            <consortium name="US DOE Joint Genome Institute"/>
            <person name="Copeland A."/>
            <person name="Lucas S."/>
            <person name="Lapidus A."/>
            <person name="Barry K."/>
            <person name="Detter J.C."/>
            <person name="Glavina del Rio T."/>
            <person name="Hammon N."/>
            <person name="Israni S."/>
            <person name="Dalin E."/>
            <person name="Tice H."/>
            <person name="Pitluck S."/>
            <person name="Brettin T."/>
            <person name="Bruce D."/>
            <person name="Han C."/>
            <person name="Tapia R."/>
            <person name="Saunders E."/>
            <person name="Gilna P."/>
            <person name="Schmutz J."/>
            <person name="Larimer F."/>
            <person name="Land M."/>
            <person name="Kyrpides N."/>
            <person name="Anderson I."/>
            <person name="Richardson P."/>
        </authorList>
    </citation>
    <scope>NUCLEOTIDE SEQUENCE [LARGE SCALE GENOMIC DNA]</scope>
    <source>
        <strain>ATCC 51484 / DSM 6875 / VKM B-1610 / KT</strain>
    </source>
</reference>
<name>PUR4_METFK</name>
<accession>Q1H2I8</accession>
<comment type="function">
    <text evidence="1">Phosphoribosylformylglycinamidine synthase involved in the purines biosynthetic pathway. Catalyzes the ATP-dependent conversion of formylglycinamide ribonucleotide (FGAR) and glutamine to yield formylglycinamidine ribonucleotide (FGAM) and glutamate.</text>
</comment>
<comment type="catalytic activity">
    <reaction evidence="1">
        <text>N(2)-formyl-N(1)-(5-phospho-beta-D-ribosyl)glycinamide + L-glutamine + ATP + H2O = 2-formamido-N(1)-(5-O-phospho-beta-D-ribosyl)acetamidine + L-glutamate + ADP + phosphate + H(+)</text>
        <dbReference type="Rhea" id="RHEA:17129"/>
        <dbReference type="ChEBI" id="CHEBI:15377"/>
        <dbReference type="ChEBI" id="CHEBI:15378"/>
        <dbReference type="ChEBI" id="CHEBI:29985"/>
        <dbReference type="ChEBI" id="CHEBI:30616"/>
        <dbReference type="ChEBI" id="CHEBI:43474"/>
        <dbReference type="ChEBI" id="CHEBI:58359"/>
        <dbReference type="ChEBI" id="CHEBI:147286"/>
        <dbReference type="ChEBI" id="CHEBI:147287"/>
        <dbReference type="ChEBI" id="CHEBI:456216"/>
        <dbReference type="EC" id="6.3.5.3"/>
    </reaction>
</comment>
<comment type="pathway">
    <text evidence="1">Purine metabolism; IMP biosynthesis via de novo pathway; 5-amino-1-(5-phospho-D-ribosyl)imidazole from N(2)-formyl-N(1)-(5-phospho-D-ribosyl)glycinamide: step 1/2.</text>
</comment>
<comment type="subunit">
    <text evidence="1">Monomer.</text>
</comment>
<comment type="subcellular location">
    <subcellularLocation>
        <location evidence="1">Cytoplasm</location>
    </subcellularLocation>
</comment>
<comment type="similarity">
    <text evidence="1">In the N-terminal section; belongs to the FGAMS family.</text>
</comment>
<comment type="sequence caution" evidence="2">
    <conflict type="erroneous initiation">
        <sequence resource="EMBL-CDS" id="ABE49155"/>
    </conflict>
    <text>Extended N-terminus.</text>
</comment>
<comment type="sequence caution" evidence="2">
    <conflict type="erroneous initiation">
        <sequence resource="EMBL-CDS" id="ABE49299"/>
    </conflict>
    <text>Extended N-terminus.</text>
</comment>
<organism>
    <name type="scientific">Methylobacillus flagellatus (strain ATCC 51484 / DSM 6875 / VKM B-1610 / KT)</name>
    <dbReference type="NCBI Taxonomy" id="265072"/>
    <lineage>
        <taxon>Bacteria</taxon>
        <taxon>Pseudomonadati</taxon>
        <taxon>Pseudomonadota</taxon>
        <taxon>Betaproteobacteria</taxon>
        <taxon>Nitrosomonadales</taxon>
        <taxon>Methylophilaceae</taxon>
        <taxon>Methylobacillus</taxon>
    </lineage>
</organism>
<sequence length="1293" mass="140059">MISLRGSAALSPFRIEKILAALKGSAPRITHLYAEFWHFAWSDQPLSEAQQEVLKQILTYGPRMSEEAPAGELFLVIPRPGTISPWSSRATDIARHCGIEAIQRLERGIAFYAATADGSPLTDAEKAALRPLIHDRMTEAVFASLTDAQKLYHTAEPAPLSTVDILSGGKAALEAANAEMGLALSPDEVDYLIENFQRMGRNPTDVELMMFAQANSEHCRHKIFNADWVIDGVAQAQSLFGMIRNTHKLNPGKTVVAYADNASIVEGGKTKRFYPLADGQYGFVEEDMHFLMKVETHNHPTAISPFAGAATGAGGEIRDEGATGSGSKPKAGLTGFSVSNLHIPGFKQPWEHNNGKPDRIASALQIMVDGPLGGAAYNNEFGRPNIAGYFRTLEIESAGEIRGYHKPIMLAGGVGNISARHAKKNPIPPGAALIQLGGPAMLIGLGGGAASSMDTGANTENLDFDSVQRGNPELERRAQEVIDRCWQLGDKNPILSIHDVGAGGISNAFPELVNDAGVGARFQLRDVHNEEPGMSPREIWSNEAQERYVMAVRKEDLPLFAEICERERCPFAVVGEATEEKRLVVSDRHFGNTPVDMDLSVLLGKPPKMTRDVQHVARELPAFDHSRIDLKEAAQRVLRLPGVADKTFLITIGDRSVTGMIARDQMVGPWQVPVADVAVTLDGFETYRGEAFAIGEKAPLALIDAPASGRMAIGEAITNIAASLIEDIADLKLSANWMAPAGHPGEDAALFDTVKAVGMELCPQLGISIPVGKDSMSMKTVWEERNEKKAVTAPISLVVTAFAPTADARKTLTPQLRTDLGDTRLLLIDLGAGRNRLGGSALAQVYGSVGNVAPDVEDADSLKHFFNAVQKLNREGRLLAYHDRSDGGLFATVVEMAFAGRTGLELDIASLGEDAVAVLYNEELGAVLQVRAADLDAITAELETTLRGKVHVIGAPASHGDIVIRQGTKLVFAESRVALHRAWSETTYQMQKLRDNPVCAQQEYDRLLDERDAGLHAKLTFDINENIAAPYIASGARPKMAILREQGVNGQVEMAAAFDRAGFNAFDVHMSDIISGRVSLKDFAGFVACGGFSYGDVLGAGEGWAKSILFNPRARDEFTAFFNRTDSFALGVCNGCQMMSNLHSIIPGAGHWPHFVRNRSEQFEARVAMVEVLDSPSLFFNGMAGSRMPIAVAHGEGYAEFADAAAQQRAQDARLVTLRYVDNSGLPTEVYPFNPNGSPQGITGLTTADGRFSIMMPHPERVFRTVQHSWHPDGWGEDGPWIRMFRNARKFIG</sequence>
<dbReference type="EC" id="6.3.5.3" evidence="1"/>
<dbReference type="EMBL" id="CP000284">
    <property type="protein sequence ID" value="ABE49299.1"/>
    <property type="status" value="ALT_INIT"/>
    <property type="molecule type" value="Genomic_DNA"/>
</dbReference>
<dbReference type="EMBL" id="CP000284">
    <property type="protein sequence ID" value="ABE49155.1"/>
    <property type="status" value="ALT_INIT"/>
    <property type="molecule type" value="Genomic_DNA"/>
</dbReference>
<dbReference type="RefSeq" id="WP_011479252.1">
    <property type="nucleotide sequence ID" value="NC_007947.1"/>
</dbReference>
<dbReference type="SMR" id="Q1H2I8"/>
<dbReference type="STRING" id="265072.Mfla_0887"/>
<dbReference type="KEGG" id="mfa:Mfla_0887"/>
<dbReference type="KEGG" id="mfa:Mfla_1031"/>
<dbReference type="eggNOG" id="COG0046">
    <property type="taxonomic scope" value="Bacteria"/>
</dbReference>
<dbReference type="eggNOG" id="COG0047">
    <property type="taxonomic scope" value="Bacteria"/>
</dbReference>
<dbReference type="HOGENOM" id="CLU_001031_0_2_4"/>
<dbReference type="OrthoDB" id="9804441at2"/>
<dbReference type="UniPathway" id="UPA00074">
    <property type="reaction ID" value="UER00128"/>
</dbReference>
<dbReference type="Proteomes" id="UP000002440">
    <property type="component" value="Chromosome"/>
</dbReference>
<dbReference type="GO" id="GO:0005737">
    <property type="term" value="C:cytoplasm"/>
    <property type="evidence" value="ECO:0007669"/>
    <property type="project" value="UniProtKB-SubCell"/>
</dbReference>
<dbReference type="GO" id="GO:0005524">
    <property type="term" value="F:ATP binding"/>
    <property type="evidence" value="ECO:0007669"/>
    <property type="project" value="UniProtKB-UniRule"/>
</dbReference>
<dbReference type="GO" id="GO:0046872">
    <property type="term" value="F:metal ion binding"/>
    <property type="evidence" value="ECO:0007669"/>
    <property type="project" value="UniProtKB-KW"/>
</dbReference>
<dbReference type="GO" id="GO:0004642">
    <property type="term" value="F:phosphoribosylformylglycinamidine synthase activity"/>
    <property type="evidence" value="ECO:0007669"/>
    <property type="project" value="UniProtKB-UniRule"/>
</dbReference>
<dbReference type="GO" id="GO:0006189">
    <property type="term" value="P:'de novo' IMP biosynthetic process"/>
    <property type="evidence" value="ECO:0007669"/>
    <property type="project" value="UniProtKB-UniRule"/>
</dbReference>
<dbReference type="CDD" id="cd01740">
    <property type="entry name" value="GATase1_FGAR_AT"/>
    <property type="match status" value="1"/>
</dbReference>
<dbReference type="CDD" id="cd02203">
    <property type="entry name" value="PurL_repeat1"/>
    <property type="match status" value="1"/>
</dbReference>
<dbReference type="CDD" id="cd02204">
    <property type="entry name" value="PurL_repeat2"/>
    <property type="match status" value="1"/>
</dbReference>
<dbReference type="FunFam" id="1.10.8.750:FF:000002">
    <property type="entry name" value="Phosphoribosylformylglycinamidine synthase"/>
    <property type="match status" value="1"/>
</dbReference>
<dbReference type="FunFam" id="3.30.1330.10:FF:000002">
    <property type="entry name" value="Phosphoribosylformylglycinamidine synthase"/>
    <property type="match status" value="1"/>
</dbReference>
<dbReference type="FunFam" id="3.30.1330.10:FF:000005">
    <property type="entry name" value="Phosphoribosylformylglycinamidine synthase"/>
    <property type="match status" value="1"/>
</dbReference>
<dbReference type="FunFam" id="3.40.50.880:FF:000008">
    <property type="entry name" value="Phosphoribosylformylglycinamidine synthase"/>
    <property type="match status" value="1"/>
</dbReference>
<dbReference type="FunFam" id="3.90.650.10:FF:000002">
    <property type="entry name" value="Phosphoribosylformylglycinamidine synthase"/>
    <property type="match status" value="1"/>
</dbReference>
<dbReference type="FunFam" id="3.90.650.10:FF:000005">
    <property type="entry name" value="Phosphoribosylformylglycinamidine synthase"/>
    <property type="match status" value="1"/>
</dbReference>
<dbReference type="Gene3D" id="3.40.50.880">
    <property type="match status" value="1"/>
</dbReference>
<dbReference type="Gene3D" id="1.10.8.750">
    <property type="entry name" value="Phosphoribosylformylglycinamidine synthase, linker domain"/>
    <property type="match status" value="1"/>
</dbReference>
<dbReference type="Gene3D" id="3.90.650.10">
    <property type="entry name" value="PurM-like C-terminal domain"/>
    <property type="match status" value="2"/>
</dbReference>
<dbReference type="Gene3D" id="3.30.1330.10">
    <property type="entry name" value="PurM-like, N-terminal domain"/>
    <property type="match status" value="2"/>
</dbReference>
<dbReference type="HAMAP" id="MF_00419">
    <property type="entry name" value="PurL_1"/>
    <property type="match status" value="1"/>
</dbReference>
<dbReference type="InterPro" id="IPR029062">
    <property type="entry name" value="Class_I_gatase-like"/>
</dbReference>
<dbReference type="InterPro" id="IPR040707">
    <property type="entry name" value="FGAR-AT_N"/>
</dbReference>
<dbReference type="InterPro" id="IPR055181">
    <property type="entry name" value="FGAR-AT_PurM_N-like"/>
</dbReference>
<dbReference type="InterPro" id="IPR010073">
    <property type="entry name" value="PurL_large"/>
</dbReference>
<dbReference type="InterPro" id="IPR041609">
    <property type="entry name" value="PurL_linker"/>
</dbReference>
<dbReference type="InterPro" id="IPR010918">
    <property type="entry name" value="PurM-like_C_dom"/>
</dbReference>
<dbReference type="InterPro" id="IPR036676">
    <property type="entry name" value="PurM-like_C_sf"/>
</dbReference>
<dbReference type="InterPro" id="IPR036921">
    <property type="entry name" value="PurM-like_N_sf"/>
</dbReference>
<dbReference type="InterPro" id="IPR036604">
    <property type="entry name" value="PurS-like_sf"/>
</dbReference>
<dbReference type="NCBIfam" id="TIGR01735">
    <property type="entry name" value="FGAM_synt"/>
    <property type="match status" value="1"/>
</dbReference>
<dbReference type="NCBIfam" id="NF003672">
    <property type="entry name" value="PRK05297.1"/>
    <property type="match status" value="1"/>
</dbReference>
<dbReference type="PANTHER" id="PTHR10099">
    <property type="entry name" value="PHOSPHORIBOSYLFORMYLGLYCINAMIDINE SYNTHASE"/>
    <property type="match status" value="1"/>
</dbReference>
<dbReference type="PANTHER" id="PTHR10099:SF1">
    <property type="entry name" value="PHOSPHORIBOSYLFORMYLGLYCINAMIDINE SYNTHASE"/>
    <property type="match status" value="1"/>
</dbReference>
<dbReference type="Pfam" id="PF02769">
    <property type="entry name" value="AIRS_C"/>
    <property type="match status" value="2"/>
</dbReference>
<dbReference type="Pfam" id="PF18072">
    <property type="entry name" value="FGAR-AT_linker"/>
    <property type="match status" value="1"/>
</dbReference>
<dbReference type="Pfam" id="PF18076">
    <property type="entry name" value="FGAR-AT_N"/>
    <property type="match status" value="1"/>
</dbReference>
<dbReference type="Pfam" id="PF22689">
    <property type="entry name" value="FGAR-AT_PurM_N-like"/>
    <property type="match status" value="1"/>
</dbReference>
<dbReference type="Pfam" id="PF13507">
    <property type="entry name" value="GATase_5"/>
    <property type="match status" value="1"/>
</dbReference>
<dbReference type="SMART" id="SM01211">
    <property type="entry name" value="GATase_5"/>
    <property type="match status" value="1"/>
</dbReference>
<dbReference type="SUPFAM" id="SSF52317">
    <property type="entry name" value="Class I glutamine amidotransferase-like"/>
    <property type="match status" value="1"/>
</dbReference>
<dbReference type="SUPFAM" id="SSF109736">
    <property type="entry name" value="FGAM synthase PurL, linker domain"/>
    <property type="match status" value="1"/>
</dbReference>
<dbReference type="SUPFAM" id="SSF56042">
    <property type="entry name" value="PurM C-terminal domain-like"/>
    <property type="match status" value="2"/>
</dbReference>
<dbReference type="SUPFAM" id="SSF55326">
    <property type="entry name" value="PurM N-terminal domain-like"/>
    <property type="match status" value="2"/>
</dbReference>
<dbReference type="SUPFAM" id="SSF82697">
    <property type="entry name" value="PurS-like"/>
    <property type="match status" value="1"/>
</dbReference>
<dbReference type="PROSITE" id="PS51273">
    <property type="entry name" value="GATASE_TYPE_1"/>
    <property type="match status" value="1"/>
</dbReference>